<proteinExistence type="inferred from homology"/>
<sequence length="207" mass="23151">MARYIGPKAKLSRREGTDLFLKSARRSLADKCKLDSKPGQHGRISGARTSDYGTQLREKQKVKRIYGVLERQFRRYFAEADRRKGNTGETLLQLLESRLDNVVYRMGFGSTRAEARQLVSHKAITVNGIVANIPSQQVKAGDVVAIREKAKKQARIVEALSLAEQGGMPSWVAVDAKKFEGTFKQVPERADIAGDINESLIVELYSR</sequence>
<dbReference type="EMBL" id="CP000124">
    <property type="protein sequence ID" value="ABA50307.1"/>
    <property type="molecule type" value="Genomic_DNA"/>
</dbReference>
<dbReference type="RefSeq" id="WP_004197926.1">
    <property type="nucleotide sequence ID" value="NC_007434.1"/>
</dbReference>
<dbReference type="SMR" id="Q3JMT8"/>
<dbReference type="EnsemblBacteria" id="ABA50307">
    <property type="protein sequence ID" value="ABA50307"/>
    <property type="gene ID" value="BURPS1710b_3751"/>
</dbReference>
<dbReference type="GeneID" id="93061807"/>
<dbReference type="KEGG" id="bpm:BURPS1710b_3751"/>
<dbReference type="HOGENOM" id="CLU_092403_0_2_4"/>
<dbReference type="Proteomes" id="UP000002700">
    <property type="component" value="Chromosome I"/>
</dbReference>
<dbReference type="GO" id="GO:0015935">
    <property type="term" value="C:small ribosomal subunit"/>
    <property type="evidence" value="ECO:0007669"/>
    <property type="project" value="InterPro"/>
</dbReference>
<dbReference type="GO" id="GO:0019843">
    <property type="term" value="F:rRNA binding"/>
    <property type="evidence" value="ECO:0007669"/>
    <property type="project" value="UniProtKB-UniRule"/>
</dbReference>
<dbReference type="GO" id="GO:0003735">
    <property type="term" value="F:structural constituent of ribosome"/>
    <property type="evidence" value="ECO:0007669"/>
    <property type="project" value="InterPro"/>
</dbReference>
<dbReference type="GO" id="GO:0042274">
    <property type="term" value="P:ribosomal small subunit biogenesis"/>
    <property type="evidence" value="ECO:0007669"/>
    <property type="project" value="TreeGrafter"/>
</dbReference>
<dbReference type="GO" id="GO:0006412">
    <property type="term" value="P:translation"/>
    <property type="evidence" value="ECO:0007669"/>
    <property type="project" value="UniProtKB-UniRule"/>
</dbReference>
<dbReference type="CDD" id="cd00165">
    <property type="entry name" value="S4"/>
    <property type="match status" value="1"/>
</dbReference>
<dbReference type="FunFam" id="1.10.1050.10:FF:000001">
    <property type="entry name" value="30S ribosomal protein S4"/>
    <property type="match status" value="1"/>
</dbReference>
<dbReference type="FunFam" id="3.10.290.10:FF:000001">
    <property type="entry name" value="30S ribosomal protein S4"/>
    <property type="match status" value="1"/>
</dbReference>
<dbReference type="Gene3D" id="1.10.1050.10">
    <property type="entry name" value="Ribosomal Protein S4 Delta 41, Chain A, domain 1"/>
    <property type="match status" value="1"/>
</dbReference>
<dbReference type="Gene3D" id="3.10.290.10">
    <property type="entry name" value="RNA-binding S4 domain"/>
    <property type="match status" value="1"/>
</dbReference>
<dbReference type="HAMAP" id="MF_01306_B">
    <property type="entry name" value="Ribosomal_uS4_B"/>
    <property type="match status" value="1"/>
</dbReference>
<dbReference type="InterPro" id="IPR022801">
    <property type="entry name" value="Ribosomal_uS4"/>
</dbReference>
<dbReference type="InterPro" id="IPR005709">
    <property type="entry name" value="Ribosomal_uS4_bac-type"/>
</dbReference>
<dbReference type="InterPro" id="IPR018079">
    <property type="entry name" value="Ribosomal_uS4_CS"/>
</dbReference>
<dbReference type="InterPro" id="IPR001912">
    <property type="entry name" value="Ribosomal_uS4_N"/>
</dbReference>
<dbReference type="InterPro" id="IPR002942">
    <property type="entry name" value="S4_RNA-bd"/>
</dbReference>
<dbReference type="InterPro" id="IPR036986">
    <property type="entry name" value="S4_RNA-bd_sf"/>
</dbReference>
<dbReference type="NCBIfam" id="NF003717">
    <property type="entry name" value="PRK05327.1"/>
    <property type="match status" value="1"/>
</dbReference>
<dbReference type="NCBIfam" id="TIGR01017">
    <property type="entry name" value="rpsD_bact"/>
    <property type="match status" value="1"/>
</dbReference>
<dbReference type="PANTHER" id="PTHR11831">
    <property type="entry name" value="30S 40S RIBOSOMAL PROTEIN"/>
    <property type="match status" value="1"/>
</dbReference>
<dbReference type="PANTHER" id="PTHR11831:SF4">
    <property type="entry name" value="SMALL RIBOSOMAL SUBUNIT PROTEIN US4M"/>
    <property type="match status" value="1"/>
</dbReference>
<dbReference type="Pfam" id="PF00163">
    <property type="entry name" value="Ribosomal_S4"/>
    <property type="match status" value="1"/>
</dbReference>
<dbReference type="Pfam" id="PF01479">
    <property type="entry name" value="S4"/>
    <property type="match status" value="1"/>
</dbReference>
<dbReference type="SMART" id="SM01390">
    <property type="entry name" value="Ribosomal_S4"/>
    <property type="match status" value="1"/>
</dbReference>
<dbReference type="SMART" id="SM00363">
    <property type="entry name" value="S4"/>
    <property type="match status" value="1"/>
</dbReference>
<dbReference type="SUPFAM" id="SSF55174">
    <property type="entry name" value="Alpha-L RNA-binding motif"/>
    <property type="match status" value="1"/>
</dbReference>
<dbReference type="PROSITE" id="PS00632">
    <property type="entry name" value="RIBOSOMAL_S4"/>
    <property type="match status" value="1"/>
</dbReference>
<dbReference type="PROSITE" id="PS50889">
    <property type="entry name" value="S4"/>
    <property type="match status" value="1"/>
</dbReference>
<reference key="1">
    <citation type="journal article" date="2010" name="Genome Biol. Evol.">
        <title>Continuing evolution of Burkholderia mallei through genome reduction and large-scale rearrangements.</title>
        <authorList>
            <person name="Losada L."/>
            <person name="Ronning C.M."/>
            <person name="DeShazer D."/>
            <person name="Woods D."/>
            <person name="Fedorova N."/>
            <person name="Kim H.S."/>
            <person name="Shabalina S.A."/>
            <person name="Pearson T.R."/>
            <person name="Brinkac L."/>
            <person name="Tan P."/>
            <person name="Nandi T."/>
            <person name="Crabtree J."/>
            <person name="Badger J."/>
            <person name="Beckstrom-Sternberg S."/>
            <person name="Saqib M."/>
            <person name="Schutzer S.E."/>
            <person name="Keim P."/>
            <person name="Nierman W.C."/>
        </authorList>
    </citation>
    <scope>NUCLEOTIDE SEQUENCE [LARGE SCALE GENOMIC DNA]</scope>
    <source>
        <strain>1710b</strain>
    </source>
</reference>
<comment type="function">
    <text evidence="1">One of the primary rRNA binding proteins, it binds directly to 16S rRNA where it nucleates assembly of the body of the 30S subunit.</text>
</comment>
<comment type="function">
    <text evidence="1">With S5 and S12 plays an important role in translational accuracy.</text>
</comment>
<comment type="subunit">
    <text evidence="1">Part of the 30S ribosomal subunit. Contacts protein S5. The interaction surface between S4 and S5 is involved in control of translational fidelity.</text>
</comment>
<comment type="similarity">
    <text evidence="1">Belongs to the universal ribosomal protein uS4 family.</text>
</comment>
<name>RS4_BURP1</name>
<feature type="chain" id="PRO_0000228881" description="Small ribosomal subunit protein uS4">
    <location>
        <begin position="1"/>
        <end position="207"/>
    </location>
</feature>
<feature type="domain" description="S4 RNA-binding" evidence="1">
    <location>
        <begin position="97"/>
        <end position="160"/>
    </location>
</feature>
<gene>
    <name evidence="1" type="primary">rpsD</name>
    <name type="ordered locus">BURPS1710b_3751</name>
</gene>
<protein>
    <recommendedName>
        <fullName evidence="1">Small ribosomal subunit protein uS4</fullName>
    </recommendedName>
    <alternativeName>
        <fullName evidence="2">30S ribosomal protein S4</fullName>
    </alternativeName>
</protein>
<accession>Q3JMT8</accession>
<organism>
    <name type="scientific">Burkholderia pseudomallei (strain 1710b)</name>
    <dbReference type="NCBI Taxonomy" id="320372"/>
    <lineage>
        <taxon>Bacteria</taxon>
        <taxon>Pseudomonadati</taxon>
        <taxon>Pseudomonadota</taxon>
        <taxon>Betaproteobacteria</taxon>
        <taxon>Burkholderiales</taxon>
        <taxon>Burkholderiaceae</taxon>
        <taxon>Burkholderia</taxon>
        <taxon>pseudomallei group</taxon>
    </lineage>
</organism>
<evidence type="ECO:0000255" key="1">
    <source>
        <dbReference type="HAMAP-Rule" id="MF_01306"/>
    </source>
</evidence>
<evidence type="ECO:0000305" key="2"/>
<keyword id="KW-0687">Ribonucleoprotein</keyword>
<keyword id="KW-0689">Ribosomal protein</keyword>
<keyword id="KW-0694">RNA-binding</keyword>
<keyword id="KW-0699">rRNA-binding</keyword>